<keyword id="KW-0175">Coiled coil</keyword>
<keyword id="KW-0238">DNA-binding</keyword>
<keyword id="KW-1185">Reference proteome</keyword>
<keyword id="KW-0804">Transcription</keyword>
<keyword id="KW-0805">Transcription regulation</keyword>
<protein>
    <recommendedName>
        <fullName evidence="1">Transcription elongation factor GreA</fullName>
    </recommendedName>
    <alternativeName>
        <fullName evidence="1">Transcript cleavage factor GreA</fullName>
    </alternativeName>
</protein>
<gene>
    <name evidence="1" type="primary">greA</name>
    <name type="ordered locus">SMU_1728</name>
</gene>
<name>GREA_STRMU</name>
<accession>Q8DSP7</accession>
<evidence type="ECO:0000255" key="1">
    <source>
        <dbReference type="HAMAP-Rule" id="MF_00105"/>
    </source>
</evidence>
<reference key="1">
    <citation type="journal article" date="2002" name="Proc. Natl. Acad. Sci. U.S.A.">
        <title>Genome sequence of Streptococcus mutans UA159, a cariogenic dental pathogen.</title>
        <authorList>
            <person name="Ajdic D.J."/>
            <person name="McShan W.M."/>
            <person name="McLaughlin R.E."/>
            <person name="Savic G."/>
            <person name="Chang J."/>
            <person name="Carson M.B."/>
            <person name="Primeaux C."/>
            <person name="Tian R."/>
            <person name="Kenton S."/>
            <person name="Jia H.G."/>
            <person name="Lin S.P."/>
            <person name="Qian Y."/>
            <person name="Li S."/>
            <person name="Zhu H."/>
            <person name="Najar F.Z."/>
            <person name="Lai H."/>
            <person name="White J."/>
            <person name="Roe B.A."/>
            <person name="Ferretti J.J."/>
        </authorList>
    </citation>
    <scope>NUCLEOTIDE SEQUENCE [LARGE SCALE GENOMIC DNA]</scope>
    <source>
        <strain>ATCC 700610 / UA159</strain>
    </source>
</reference>
<proteinExistence type="inferred from homology"/>
<dbReference type="EMBL" id="AE014133">
    <property type="protein sequence ID" value="AAN59361.1"/>
    <property type="molecule type" value="Genomic_DNA"/>
</dbReference>
<dbReference type="RefSeq" id="NP_722055.1">
    <property type="nucleotide sequence ID" value="NC_004350.2"/>
</dbReference>
<dbReference type="RefSeq" id="WP_002262548.1">
    <property type="nucleotide sequence ID" value="NC_004350.2"/>
</dbReference>
<dbReference type="SMR" id="Q8DSP7"/>
<dbReference type="STRING" id="210007.SMU_1728"/>
<dbReference type="GeneID" id="93858852"/>
<dbReference type="KEGG" id="smu:SMU_1728"/>
<dbReference type="PATRIC" id="fig|210007.7.peg.1544"/>
<dbReference type="eggNOG" id="COG0782">
    <property type="taxonomic scope" value="Bacteria"/>
</dbReference>
<dbReference type="HOGENOM" id="CLU_101379_2_1_9"/>
<dbReference type="OrthoDB" id="9808774at2"/>
<dbReference type="PhylomeDB" id="Q8DSP7"/>
<dbReference type="Proteomes" id="UP000002512">
    <property type="component" value="Chromosome"/>
</dbReference>
<dbReference type="GO" id="GO:0003677">
    <property type="term" value="F:DNA binding"/>
    <property type="evidence" value="ECO:0007669"/>
    <property type="project" value="UniProtKB-UniRule"/>
</dbReference>
<dbReference type="GO" id="GO:0070063">
    <property type="term" value="F:RNA polymerase binding"/>
    <property type="evidence" value="ECO:0007669"/>
    <property type="project" value="InterPro"/>
</dbReference>
<dbReference type="GO" id="GO:0006354">
    <property type="term" value="P:DNA-templated transcription elongation"/>
    <property type="evidence" value="ECO:0007669"/>
    <property type="project" value="TreeGrafter"/>
</dbReference>
<dbReference type="GO" id="GO:0032784">
    <property type="term" value="P:regulation of DNA-templated transcription elongation"/>
    <property type="evidence" value="ECO:0007669"/>
    <property type="project" value="UniProtKB-UniRule"/>
</dbReference>
<dbReference type="FunFam" id="1.10.287.180:FF:000001">
    <property type="entry name" value="Transcription elongation factor GreA"/>
    <property type="match status" value="1"/>
</dbReference>
<dbReference type="FunFam" id="3.10.50.30:FF:000001">
    <property type="entry name" value="Transcription elongation factor GreA"/>
    <property type="match status" value="1"/>
</dbReference>
<dbReference type="Gene3D" id="3.10.50.30">
    <property type="entry name" value="Transcription elongation factor, GreA/GreB, C-terminal domain"/>
    <property type="match status" value="1"/>
</dbReference>
<dbReference type="Gene3D" id="1.10.287.180">
    <property type="entry name" value="Transcription elongation factor, GreA/GreB, N-terminal domain"/>
    <property type="match status" value="1"/>
</dbReference>
<dbReference type="HAMAP" id="MF_00105">
    <property type="entry name" value="GreA_GreB"/>
    <property type="match status" value="1"/>
</dbReference>
<dbReference type="InterPro" id="IPR036953">
    <property type="entry name" value="GreA/GreB_C_sf"/>
</dbReference>
<dbReference type="InterPro" id="IPR018151">
    <property type="entry name" value="TF_GreA/GreB_CS"/>
</dbReference>
<dbReference type="InterPro" id="IPR006359">
    <property type="entry name" value="Tscrpt_elong_fac_GreA"/>
</dbReference>
<dbReference type="InterPro" id="IPR028624">
    <property type="entry name" value="Tscrpt_elong_fac_GreA/B"/>
</dbReference>
<dbReference type="InterPro" id="IPR001437">
    <property type="entry name" value="Tscrpt_elong_fac_GreA/B_C"/>
</dbReference>
<dbReference type="InterPro" id="IPR023459">
    <property type="entry name" value="Tscrpt_elong_fac_GreA/B_fam"/>
</dbReference>
<dbReference type="InterPro" id="IPR022691">
    <property type="entry name" value="Tscrpt_elong_fac_GreA/B_N"/>
</dbReference>
<dbReference type="InterPro" id="IPR036805">
    <property type="entry name" value="Tscrpt_elong_fac_GreA/B_N_sf"/>
</dbReference>
<dbReference type="NCBIfam" id="TIGR01462">
    <property type="entry name" value="greA"/>
    <property type="match status" value="1"/>
</dbReference>
<dbReference type="NCBIfam" id="NF001260">
    <property type="entry name" value="PRK00226.1-1"/>
    <property type="match status" value="1"/>
</dbReference>
<dbReference type="NCBIfam" id="NF001263">
    <property type="entry name" value="PRK00226.1-4"/>
    <property type="match status" value="1"/>
</dbReference>
<dbReference type="PANTHER" id="PTHR30437">
    <property type="entry name" value="TRANSCRIPTION ELONGATION FACTOR GREA"/>
    <property type="match status" value="1"/>
</dbReference>
<dbReference type="PANTHER" id="PTHR30437:SF4">
    <property type="entry name" value="TRANSCRIPTION ELONGATION FACTOR GREA"/>
    <property type="match status" value="1"/>
</dbReference>
<dbReference type="Pfam" id="PF01272">
    <property type="entry name" value="GreA_GreB"/>
    <property type="match status" value="1"/>
</dbReference>
<dbReference type="Pfam" id="PF03449">
    <property type="entry name" value="GreA_GreB_N"/>
    <property type="match status" value="1"/>
</dbReference>
<dbReference type="PIRSF" id="PIRSF006092">
    <property type="entry name" value="GreA_GreB"/>
    <property type="match status" value="1"/>
</dbReference>
<dbReference type="SUPFAM" id="SSF54534">
    <property type="entry name" value="FKBP-like"/>
    <property type="match status" value="1"/>
</dbReference>
<dbReference type="SUPFAM" id="SSF46557">
    <property type="entry name" value="GreA transcript cleavage protein, N-terminal domain"/>
    <property type="match status" value="1"/>
</dbReference>
<dbReference type="PROSITE" id="PS00829">
    <property type="entry name" value="GREAB_1"/>
    <property type="match status" value="1"/>
</dbReference>
<dbReference type="PROSITE" id="PS00830">
    <property type="entry name" value="GREAB_2"/>
    <property type="match status" value="1"/>
</dbReference>
<feature type="chain" id="PRO_1000034307" description="Transcription elongation factor GreA">
    <location>
        <begin position="1"/>
        <end position="160"/>
    </location>
</feature>
<feature type="coiled-coil region" evidence="1">
    <location>
        <begin position="2"/>
        <end position="30"/>
    </location>
</feature>
<organism>
    <name type="scientific">Streptococcus mutans serotype c (strain ATCC 700610 / UA159)</name>
    <dbReference type="NCBI Taxonomy" id="210007"/>
    <lineage>
        <taxon>Bacteria</taxon>
        <taxon>Bacillati</taxon>
        <taxon>Bacillota</taxon>
        <taxon>Bacilli</taxon>
        <taxon>Lactobacillales</taxon>
        <taxon>Streptococcaceae</taxon>
        <taxon>Streptococcus</taxon>
    </lineage>
</organism>
<comment type="function">
    <text evidence="1">Necessary for efficient RNA polymerase transcription elongation past template-encoded arresting sites. The arresting sites in DNA have the property of trapping a certain fraction of elongating RNA polymerases that pass through, resulting in locked ternary complexes. Cleavage of the nascent transcript by cleavage factors such as GreA or GreB allows the resumption of elongation from the new 3'terminus. GreA releases sequences of 2 to 3 nucleotides.</text>
</comment>
<comment type="similarity">
    <text evidence="1">Belongs to the GreA/GreB family.</text>
</comment>
<sequence>MSEKTYPMTLAEKEQLEQELEELKLVRRPEVIERIKIARSYGDLSENSEYEAAKDEQAFVEGQISSIETKIRYAEIVDSDAVAKNEVAIGKTVIVREVGTNDEDTYSIVGAAGADVFAGKISNESPIAQALIGKKTGDKVMIESPAGSYQVEIVKVKKTK</sequence>